<protein>
    <recommendedName>
        <fullName evidence="1">Methylenetetrahydrofolate--tRNA-(uracil-5-)-methyltransferase TrmFO</fullName>
        <ecNumber evidence="1">2.1.1.74</ecNumber>
    </recommendedName>
    <alternativeName>
        <fullName evidence="1">Folate-dependent tRNA (uracil-5-)-methyltransferase</fullName>
    </alternativeName>
    <alternativeName>
        <fullName evidence="1">Folate-dependent tRNA(M-5-U54)-methyltransferase</fullName>
    </alternativeName>
</protein>
<feature type="chain" id="PRO_0000117274" description="Methylenetetrahydrofolate--tRNA-(uracil-5-)-methyltransferase TrmFO">
    <location>
        <begin position="1"/>
        <end position="448"/>
    </location>
</feature>
<feature type="binding site" evidence="1">
    <location>
        <begin position="13"/>
        <end position="18"/>
    </location>
    <ligand>
        <name>FAD</name>
        <dbReference type="ChEBI" id="CHEBI:57692"/>
    </ligand>
</feature>
<comment type="function">
    <text evidence="1">Catalyzes the folate-dependent formation of 5-methyl-uridine at position 54 (M-5-U54) in all tRNAs.</text>
</comment>
<comment type="catalytic activity">
    <reaction evidence="1">
        <text>uridine(54) in tRNA + (6R)-5,10-methylene-5,6,7,8-tetrahydrofolate + NADH + H(+) = 5-methyluridine(54) in tRNA + (6S)-5,6,7,8-tetrahydrofolate + NAD(+)</text>
        <dbReference type="Rhea" id="RHEA:16873"/>
        <dbReference type="Rhea" id="RHEA-COMP:10167"/>
        <dbReference type="Rhea" id="RHEA-COMP:10193"/>
        <dbReference type="ChEBI" id="CHEBI:15378"/>
        <dbReference type="ChEBI" id="CHEBI:15636"/>
        <dbReference type="ChEBI" id="CHEBI:57453"/>
        <dbReference type="ChEBI" id="CHEBI:57540"/>
        <dbReference type="ChEBI" id="CHEBI:57945"/>
        <dbReference type="ChEBI" id="CHEBI:65315"/>
        <dbReference type="ChEBI" id="CHEBI:74447"/>
        <dbReference type="EC" id="2.1.1.74"/>
    </reaction>
</comment>
<comment type="catalytic activity">
    <reaction evidence="1">
        <text>uridine(54) in tRNA + (6R)-5,10-methylene-5,6,7,8-tetrahydrofolate + NADPH + H(+) = 5-methyluridine(54) in tRNA + (6S)-5,6,7,8-tetrahydrofolate + NADP(+)</text>
        <dbReference type="Rhea" id="RHEA:62372"/>
        <dbReference type="Rhea" id="RHEA-COMP:10167"/>
        <dbReference type="Rhea" id="RHEA-COMP:10193"/>
        <dbReference type="ChEBI" id="CHEBI:15378"/>
        <dbReference type="ChEBI" id="CHEBI:15636"/>
        <dbReference type="ChEBI" id="CHEBI:57453"/>
        <dbReference type="ChEBI" id="CHEBI:57783"/>
        <dbReference type="ChEBI" id="CHEBI:58349"/>
        <dbReference type="ChEBI" id="CHEBI:65315"/>
        <dbReference type="ChEBI" id="CHEBI:74447"/>
        <dbReference type="EC" id="2.1.1.74"/>
    </reaction>
</comment>
<comment type="cofactor">
    <cofactor evidence="1">
        <name>FAD</name>
        <dbReference type="ChEBI" id="CHEBI:57692"/>
    </cofactor>
</comment>
<comment type="subcellular location">
    <subcellularLocation>
        <location evidence="1">Cytoplasm</location>
    </subcellularLocation>
</comment>
<comment type="similarity">
    <text evidence="1">Belongs to the MnmG family. TrmFO subfamily.</text>
</comment>
<sequence>MSQSTATYINVIGAGLAGSEAAYQIAKRGIPVKLYEMRGVKATPQHKTTNFAELVCSNSFRGDSLTNAVGLLKEEMRRLDSIIMRNGEANRVPAGGAMAVDREGYAESVTAELENHPLIEVIRGEITEIPDDAITVIATGPLTSDALAEKIHALNGGDGFYFYDAAAPIIDKSTIDMSKVYLKSRYDKGEAAYLNCPMTKEEFMAFHEALTTAEEAPLNAFEKEKYFEGCMPIEVMAKRGIKTMLYGPMKPVGLEYPDDYTGPRDGEFKTPYAVVQLRQDNAAGSLYNIVGFQTHLKWGEQKRVFQMIPGLENAEFVRYGVMHRNSYMDSPNLLTETFQSRSNPNLFFAGQMTGVEGYVESAASGLVAGINAARLFKREEALIFPQTTAIGSLPHYVTHADSKHFQPMNVNFGIIKELEGPRIRDKKERYEAIASRALADLDTCLASL</sequence>
<proteinExistence type="inferred from homology"/>
<name>TRMFO_STRP1</name>
<organism>
    <name type="scientific">Streptococcus pyogenes serotype M1</name>
    <dbReference type="NCBI Taxonomy" id="301447"/>
    <lineage>
        <taxon>Bacteria</taxon>
        <taxon>Bacillati</taxon>
        <taxon>Bacillota</taxon>
        <taxon>Bacilli</taxon>
        <taxon>Lactobacillales</taxon>
        <taxon>Streptococcaceae</taxon>
        <taxon>Streptococcus</taxon>
    </lineage>
</organism>
<accession>Q99ZL9</accession>
<accession>Q48YR1</accession>
<evidence type="ECO:0000255" key="1">
    <source>
        <dbReference type="HAMAP-Rule" id="MF_01037"/>
    </source>
</evidence>
<reference key="1">
    <citation type="journal article" date="2001" name="Proc. Natl. Acad. Sci. U.S.A.">
        <title>Complete genome sequence of an M1 strain of Streptococcus pyogenes.</title>
        <authorList>
            <person name="Ferretti J.J."/>
            <person name="McShan W.M."/>
            <person name="Ajdic D.J."/>
            <person name="Savic D.J."/>
            <person name="Savic G."/>
            <person name="Lyon K."/>
            <person name="Primeaux C."/>
            <person name="Sezate S."/>
            <person name="Suvorov A.N."/>
            <person name="Kenton S."/>
            <person name="Lai H.S."/>
            <person name="Lin S.P."/>
            <person name="Qian Y."/>
            <person name="Jia H.G."/>
            <person name="Najar F.Z."/>
            <person name="Ren Q."/>
            <person name="Zhu H."/>
            <person name="Song L."/>
            <person name="White J."/>
            <person name="Yuan X."/>
            <person name="Clifton S.W."/>
            <person name="Roe B.A."/>
            <person name="McLaughlin R.E."/>
        </authorList>
    </citation>
    <scope>NUCLEOTIDE SEQUENCE [LARGE SCALE GENOMIC DNA]</scope>
    <source>
        <strain>ATCC 700294 / SF370 / Serotype M1</strain>
    </source>
</reference>
<reference key="2">
    <citation type="journal article" date="2005" name="J. Infect. Dis.">
        <title>Evolutionary origin and emergence of a highly successful clone of serotype M1 group A Streptococcus involved multiple horizontal gene transfer events.</title>
        <authorList>
            <person name="Sumby P."/>
            <person name="Porcella S.F."/>
            <person name="Madrigal A.G."/>
            <person name="Barbian K.D."/>
            <person name="Virtaneva K."/>
            <person name="Ricklefs S.M."/>
            <person name="Sturdevant D.E."/>
            <person name="Graham M.R."/>
            <person name="Vuopio-Varkila J."/>
            <person name="Hoe N.P."/>
            <person name="Musser J.M."/>
        </authorList>
    </citation>
    <scope>NUCLEOTIDE SEQUENCE [LARGE SCALE GENOMIC DNA]</scope>
    <source>
        <strain>ATCC BAA-947 / MGAS5005 / Serotype M1</strain>
    </source>
</reference>
<keyword id="KW-0963">Cytoplasm</keyword>
<keyword id="KW-0274">FAD</keyword>
<keyword id="KW-0285">Flavoprotein</keyword>
<keyword id="KW-0489">Methyltransferase</keyword>
<keyword id="KW-0520">NAD</keyword>
<keyword id="KW-0521">NADP</keyword>
<keyword id="KW-1185">Reference proteome</keyword>
<keyword id="KW-0808">Transferase</keyword>
<keyword id="KW-0819">tRNA processing</keyword>
<gene>
    <name evidence="1" type="primary">trmFO</name>
    <name type="synonym">gid</name>
    <name type="ordered locus">SPy_1173</name>
    <name type="ordered locus">M5005_Spy0893</name>
</gene>
<dbReference type="EC" id="2.1.1.74" evidence="1"/>
<dbReference type="EMBL" id="AE004092">
    <property type="protein sequence ID" value="AAK34040.1"/>
    <property type="molecule type" value="Genomic_DNA"/>
</dbReference>
<dbReference type="EMBL" id="CP000017">
    <property type="protein sequence ID" value="AAZ51511.1"/>
    <property type="molecule type" value="Genomic_DNA"/>
</dbReference>
<dbReference type="RefSeq" id="NP_269319.1">
    <property type="nucleotide sequence ID" value="NC_002737.2"/>
</dbReference>
<dbReference type="SMR" id="Q99ZL9"/>
<dbReference type="PaxDb" id="1314-HKU360_00953"/>
<dbReference type="KEGG" id="spy:SPy_1173"/>
<dbReference type="KEGG" id="spz:M5005_Spy0893"/>
<dbReference type="PATRIC" id="fig|160490.10.peg.1024"/>
<dbReference type="HOGENOM" id="CLU_033057_1_0_9"/>
<dbReference type="OMA" id="MHRNTFL"/>
<dbReference type="Proteomes" id="UP000000750">
    <property type="component" value="Chromosome"/>
</dbReference>
<dbReference type="GO" id="GO:0005829">
    <property type="term" value="C:cytosol"/>
    <property type="evidence" value="ECO:0007669"/>
    <property type="project" value="TreeGrafter"/>
</dbReference>
<dbReference type="GO" id="GO:0050660">
    <property type="term" value="F:flavin adenine dinucleotide binding"/>
    <property type="evidence" value="ECO:0007669"/>
    <property type="project" value="UniProtKB-UniRule"/>
</dbReference>
<dbReference type="GO" id="GO:0047151">
    <property type="term" value="F:tRNA (uracil(54)-C5)-methyltransferase activity, 5,10-methylenetetrahydrofolate-dependent"/>
    <property type="evidence" value="ECO:0007669"/>
    <property type="project" value="UniProtKB-UniRule"/>
</dbReference>
<dbReference type="GO" id="GO:0030488">
    <property type="term" value="P:tRNA methylation"/>
    <property type="evidence" value="ECO:0007669"/>
    <property type="project" value="TreeGrafter"/>
</dbReference>
<dbReference type="GO" id="GO:0002098">
    <property type="term" value="P:tRNA wobble uridine modification"/>
    <property type="evidence" value="ECO:0007669"/>
    <property type="project" value="TreeGrafter"/>
</dbReference>
<dbReference type="FunFam" id="3.50.50.60:FF:000035">
    <property type="entry name" value="Methylenetetrahydrofolate--tRNA-(uracil-5-)-methyltransferase TrmFO"/>
    <property type="match status" value="1"/>
</dbReference>
<dbReference type="FunFam" id="3.50.50.60:FF:000040">
    <property type="entry name" value="Methylenetetrahydrofolate--tRNA-(uracil-5-)-methyltransferase TrmFO"/>
    <property type="match status" value="1"/>
</dbReference>
<dbReference type="Gene3D" id="3.50.50.60">
    <property type="entry name" value="FAD/NAD(P)-binding domain"/>
    <property type="match status" value="2"/>
</dbReference>
<dbReference type="HAMAP" id="MF_01037">
    <property type="entry name" value="TrmFO"/>
    <property type="match status" value="1"/>
</dbReference>
<dbReference type="InterPro" id="IPR036188">
    <property type="entry name" value="FAD/NAD-bd_sf"/>
</dbReference>
<dbReference type="InterPro" id="IPR002218">
    <property type="entry name" value="MnmG-rel"/>
</dbReference>
<dbReference type="InterPro" id="IPR020595">
    <property type="entry name" value="MnmG-rel_CS"/>
</dbReference>
<dbReference type="InterPro" id="IPR040131">
    <property type="entry name" value="MnmG_N"/>
</dbReference>
<dbReference type="InterPro" id="IPR004417">
    <property type="entry name" value="TrmFO"/>
</dbReference>
<dbReference type="NCBIfam" id="TIGR00137">
    <property type="entry name" value="gid_trmFO"/>
    <property type="match status" value="1"/>
</dbReference>
<dbReference type="NCBIfam" id="NF003739">
    <property type="entry name" value="PRK05335.1"/>
    <property type="match status" value="1"/>
</dbReference>
<dbReference type="PANTHER" id="PTHR11806">
    <property type="entry name" value="GLUCOSE INHIBITED DIVISION PROTEIN A"/>
    <property type="match status" value="1"/>
</dbReference>
<dbReference type="PANTHER" id="PTHR11806:SF2">
    <property type="entry name" value="METHYLENETETRAHYDROFOLATE--TRNA-(URACIL-5-)-METHYLTRANSFERASE TRMFO"/>
    <property type="match status" value="1"/>
</dbReference>
<dbReference type="Pfam" id="PF01134">
    <property type="entry name" value="GIDA"/>
    <property type="match status" value="1"/>
</dbReference>
<dbReference type="SUPFAM" id="SSF51905">
    <property type="entry name" value="FAD/NAD(P)-binding domain"/>
    <property type="match status" value="1"/>
</dbReference>
<dbReference type="PROSITE" id="PS01281">
    <property type="entry name" value="GIDA_2"/>
    <property type="match status" value="1"/>
</dbReference>